<gene>
    <name evidence="1" type="primary">def</name>
    <name type="ordered locus">PC1_3789</name>
</gene>
<evidence type="ECO:0000255" key="1">
    <source>
        <dbReference type="HAMAP-Rule" id="MF_00163"/>
    </source>
</evidence>
<keyword id="KW-0378">Hydrolase</keyword>
<keyword id="KW-0408">Iron</keyword>
<keyword id="KW-0479">Metal-binding</keyword>
<keyword id="KW-0648">Protein biosynthesis</keyword>
<dbReference type="EC" id="3.5.1.88" evidence="1"/>
<dbReference type="EMBL" id="CP001657">
    <property type="protein sequence ID" value="ACT14804.1"/>
    <property type="molecule type" value="Genomic_DNA"/>
</dbReference>
<dbReference type="RefSeq" id="WP_015841915.1">
    <property type="nucleotide sequence ID" value="NC_012917.1"/>
</dbReference>
<dbReference type="SMR" id="C6DFR5"/>
<dbReference type="STRING" id="561230.PC1_3789"/>
<dbReference type="GeneID" id="67792314"/>
<dbReference type="KEGG" id="pct:PC1_3789"/>
<dbReference type="eggNOG" id="COG0242">
    <property type="taxonomic scope" value="Bacteria"/>
</dbReference>
<dbReference type="HOGENOM" id="CLU_061901_2_1_6"/>
<dbReference type="OrthoDB" id="9804313at2"/>
<dbReference type="Proteomes" id="UP000002736">
    <property type="component" value="Chromosome"/>
</dbReference>
<dbReference type="GO" id="GO:0046872">
    <property type="term" value="F:metal ion binding"/>
    <property type="evidence" value="ECO:0007669"/>
    <property type="project" value="UniProtKB-KW"/>
</dbReference>
<dbReference type="GO" id="GO:0042586">
    <property type="term" value="F:peptide deformylase activity"/>
    <property type="evidence" value="ECO:0007669"/>
    <property type="project" value="UniProtKB-UniRule"/>
</dbReference>
<dbReference type="GO" id="GO:0043686">
    <property type="term" value="P:co-translational protein modification"/>
    <property type="evidence" value="ECO:0007669"/>
    <property type="project" value="TreeGrafter"/>
</dbReference>
<dbReference type="GO" id="GO:0006412">
    <property type="term" value="P:translation"/>
    <property type="evidence" value="ECO:0007669"/>
    <property type="project" value="UniProtKB-UniRule"/>
</dbReference>
<dbReference type="CDD" id="cd00487">
    <property type="entry name" value="Pep_deformylase"/>
    <property type="match status" value="1"/>
</dbReference>
<dbReference type="FunFam" id="3.90.45.10:FF:000001">
    <property type="entry name" value="Peptide deformylase"/>
    <property type="match status" value="1"/>
</dbReference>
<dbReference type="Gene3D" id="3.90.45.10">
    <property type="entry name" value="Peptide deformylase"/>
    <property type="match status" value="1"/>
</dbReference>
<dbReference type="HAMAP" id="MF_00163">
    <property type="entry name" value="Pep_deformylase"/>
    <property type="match status" value="1"/>
</dbReference>
<dbReference type="InterPro" id="IPR023635">
    <property type="entry name" value="Peptide_deformylase"/>
</dbReference>
<dbReference type="InterPro" id="IPR036821">
    <property type="entry name" value="Peptide_deformylase_sf"/>
</dbReference>
<dbReference type="NCBIfam" id="TIGR00079">
    <property type="entry name" value="pept_deformyl"/>
    <property type="match status" value="1"/>
</dbReference>
<dbReference type="NCBIfam" id="NF001159">
    <property type="entry name" value="PRK00150.1-3"/>
    <property type="match status" value="1"/>
</dbReference>
<dbReference type="PANTHER" id="PTHR10458">
    <property type="entry name" value="PEPTIDE DEFORMYLASE"/>
    <property type="match status" value="1"/>
</dbReference>
<dbReference type="PANTHER" id="PTHR10458:SF21">
    <property type="entry name" value="PEPTIDE DEFORMYLASE"/>
    <property type="match status" value="1"/>
</dbReference>
<dbReference type="Pfam" id="PF01327">
    <property type="entry name" value="Pep_deformylase"/>
    <property type="match status" value="1"/>
</dbReference>
<dbReference type="PIRSF" id="PIRSF004749">
    <property type="entry name" value="Pep_def"/>
    <property type="match status" value="1"/>
</dbReference>
<dbReference type="PRINTS" id="PR01576">
    <property type="entry name" value="PDEFORMYLASE"/>
</dbReference>
<dbReference type="SUPFAM" id="SSF56420">
    <property type="entry name" value="Peptide deformylase"/>
    <property type="match status" value="1"/>
</dbReference>
<sequence length="170" mass="19517">MAVLQVLHFPDERLRITAQPVKEVNADIQRIVDDMFDTMYEEEGIGLAATQVDIHQRIIVIDVSEERDQRLVLINPELIEKSGDTGIEEGCLSIPETRALVPRAEHVKVRALDREGKTFELEASELLAICIQHEMDHLVGKLFIDYLSPLKRQRIRQKLEKLAKQNSRAR</sequence>
<proteinExistence type="inferred from homology"/>
<comment type="function">
    <text evidence="1">Removes the formyl group from the N-terminal Met of newly synthesized proteins. Requires at least a dipeptide for an efficient rate of reaction. N-terminal L-methionine is a prerequisite for activity but the enzyme has broad specificity at other positions.</text>
</comment>
<comment type="catalytic activity">
    <reaction evidence="1">
        <text>N-terminal N-formyl-L-methionyl-[peptide] + H2O = N-terminal L-methionyl-[peptide] + formate</text>
        <dbReference type="Rhea" id="RHEA:24420"/>
        <dbReference type="Rhea" id="RHEA-COMP:10639"/>
        <dbReference type="Rhea" id="RHEA-COMP:10640"/>
        <dbReference type="ChEBI" id="CHEBI:15377"/>
        <dbReference type="ChEBI" id="CHEBI:15740"/>
        <dbReference type="ChEBI" id="CHEBI:49298"/>
        <dbReference type="ChEBI" id="CHEBI:64731"/>
        <dbReference type="EC" id="3.5.1.88"/>
    </reaction>
</comment>
<comment type="cofactor">
    <cofactor evidence="1">
        <name>Fe(2+)</name>
        <dbReference type="ChEBI" id="CHEBI:29033"/>
    </cofactor>
    <text evidence="1">Binds 1 Fe(2+) ion.</text>
</comment>
<comment type="similarity">
    <text evidence="1">Belongs to the polypeptide deformylase family.</text>
</comment>
<protein>
    <recommendedName>
        <fullName evidence="1">Peptide deformylase</fullName>
        <shortName evidence="1">PDF</shortName>
        <ecNumber evidence="1">3.5.1.88</ecNumber>
    </recommendedName>
    <alternativeName>
        <fullName evidence="1">Polypeptide deformylase</fullName>
    </alternativeName>
</protein>
<feature type="chain" id="PRO_1000203606" description="Peptide deformylase">
    <location>
        <begin position="1"/>
        <end position="170"/>
    </location>
</feature>
<feature type="active site" evidence="1">
    <location>
        <position position="134"/>
    </location>
</feature>
<feature type="binding site" evidence="1">
    <location>
        <position position="91"/>
    </location>
    <ligand>
        <name>Fe cation</name>
        <dbReference type="ChEBI" id="CHEBI:24875"/>
    </ligand>
</feature>
<feature type="binding site" evidence="1">
    <location>
        <position position="133"/>
    </location>
    <ligand>
        <name>Fe cation</name>
        <dbReference type="ChEBI" id="CHEBI:24875"/>
    </ligand>
</feature>
<feature type="binding site" evidence="1">
    <location>
        <position position="137"/>
    </location>
    <ligand>
        <name>Fe cation</name>
        <dbReference type="ChEBI" id="CHEBI:24875"/>
    </ligand>
</feature>
<name>DEF_PECCP</name>
<organism>
    <name type="scientific">Pectobacterium carotovorum subsp. carotovorum (strain PC1)</name>
    <dbReference type="NCBI Taxonomy" id="561230"/>
    <lineage>
        <taxon>Bacteria</taxon>
        <taxon>Pseudomonadati</taxon>
        <taxon>Pseudomonadota</taxon>
        <taxon>Gammaproteobacteria</taxon>
        <taxon>Enterobacterales</taxon>
        <taxon>Pectobacteriaceae</taxon>
        <taxon>Pectobacterium</taxon>
    </lineage>
</organism>
<accession>C6DFR5</accession>
<reference key="1">
    <citation type="submission" date="2009-07" db="EMBL/GenBank/DDBJ databases">
        <title>Complete sequence of Pectobacterium carotovorum subsp. carotovorum PC1.</title>
        <authorList>
            <consortium name="US DOE Joint Genome Institute"/>
            <person name="Lucas S."/>
            <person name="Copeland A."/>
            <person name="Lapidus A."/>
            <person name="Glavina del Rio T."/>
            <person name="Tice H."/>
            <person name="Bruce D."/>
            <person name="Goodwin L."/>
            <person name="Pitluck S."/>
            <person name="Munk A.C."/>
            <person name="Brettin T."/>
            <person name="Detter J.C."/>
            <person name="Han C."/>
            <person name="Tapia R."/>
            <person name="Larimer F."/>
            <person name="Land M."/>
            <person name="Hauser L."/>
            <person name="Kyrpides N."/>
            <person name="Mikhailova N."/>
            <person name="Balakrishnan V."/>
            <person name="Glasner J."/>
            <person name="Perna N.T."/>
        </authorList>
    </citation>
    <scope>NUCLEOTIDE SEQUENCE [LARGE SCALE GENOMIC DNA]</scope>
    <source>
        <strain>PC1</strain>
    </source>
</reference>